<dbReference type="EMBL" id="AY509253">
    <property type="protein sequence ID" value="AAS00993.1"/>
    <property type="molecule type" value="Genomic_DNA"/>
</dbReference>
<dbReference type="RefSeq" id="YP_024646.1">
    <property type="nucleotide sequence ID" value="NC_005881.2"/>
</dbReference>
<dbReference type="SMR" id="Q6R7C2"/>
<dbReference type="KEGG" id="vg:2948244"/>
<dbReference type="Proteomes" id="UP000007021">
    <property type="component" value="Segment"/>
</dbReference>
<sequence>MHRVKAFKNLRLLITGKKEEKNKKPVEIPARDIAANYCSRHEYDWGMFVKNENPFRGITYQSYNAFKLRRFIPDMNQEDHKEYLFLAEQAEQEALKQELKEQDLYTMIEEISDDDVFTNPTMTDLAEKLGLEDESDDDDSGINFDVSTLADEDTLYQREILDREERRKENNISNESVSEEPESPLFNDKGRIVNCSTCIYNNKLQKRGGYGVEEYAEHYVFPDDKDDNLVCLLSDADRVIREIENSNFDIEGFEQSIDYDMLIHDELFIS</sequence>
<accession>Q6R7C2</accession>
<organism>
    <name type="scientific">Ostreid herpesvirus 1 (isolate France)</name>
    <name type="common">OsHV-1</name>
    <name type="synonym">Pacific oyster herpesvirus</name>
    <dbReference type="NCBI Taxonomy" id="654903"/>
    <lineage>
        <taxon>Viruses</taxon>
        <taxon>Duplodnaviria</taxon>
        <taxon>Heunggongvirae</taxon>
        <taxon>Peploviricota</taxon>
        <taxon>Herviviricetes</taxon>
        <taxon>Herpesvirales</taxon>
        <taxon>Malacoherpesviridae</taxon>
        <taxon>Ostreavirus</taxon>
        <taxon>Ostreavirus ostreidmalaco1</taxon>
        <taxon>Ostreid herpesvirus 1</taxon>
    </lineage>
</organism>
<reference key="1">
    <citation type="journal article" date="2005" name="J. Gen. Virol.">
        <title>A novel class of herpesvirus with bivalve hosts.</title>
        <authorList>
            <person name="Davison A.J."/>
            <person name="Trus B.L."/>
            <person name="Cheng N."/>
            <person name="Steven A.C."/>
            <person name="Watson M.S."/>
            <person name="Cunningham C."/>
            <person name="Le Deuff R.M."/>
            <person name="Renault T."/>
        </authorList>
    </citation>
    <scope>NUCLEOTIDE SEQUENCE [LARGE SCALE GENOMIC DNA]</scope>
</reference>
<feature type="chain" id="PRO_0000385122" description="Uncharacterized protein ORF108">
    <location>
        <begin position="1"/>
        <end position="270"/>
    </location>
</feature>
<feature type="region of interest" description="Disordered" evidence="1">
    <location>
        <begin position="166"/>
        <end position="186"/>
    </location>
</feature>
<name>Y108_OSHVF</name>
<protein>
    <recommendedName>
        <fullName>Uncharacterized protein ORF108</fullName>
    </recommendedName>
</protein>
<organismHost>
    <name type="scientific">Magallana gigas</name>
    <name type="common">Pacific oyster</name>
    <name type="synonym">Crassostrea gigas</name>
    <dbReference type="NCBI Taxonomy" id="29159"/>
</organismHost>
<organismHost>
    <name type="scientific">Pecten maximus</name>
    <name type="common">King scallop</name>
    <name type="synonym">Pilgrim's clam</name>
    <dbReference type="NCBI Taxonomy" id="6579"/>
</organismHost>
<keyword id="KW-1185">Reference proteome</keyword>
<proteinExistence type="predicted"/>
<gene>
    <name type="ORF">ORF108</name>
</gene>
<evidence type="ECO:0000256" key="1">
    <source>
        <dbReference type="SAM" id="MobiDB-lite"/>
    </source>
</evidence>